<evidence type="ECO:0000250" key="1"/>
<evidence type="ECO:0000305" key="2"/>
<organism>
    <name type="scientific">Treponema denticola (strain ATCC 35405 / DSM 14222 / CIP 103919 / JCM 8153 / KCTC 15104)</name>
    <dbReference type="NCBI Taxonomy" id="243275"/>
    <lineage>
        <taxon>Bacteria</taxon>
        <taxon>Pseudomonadati</taxon>
        <taxon>Spirochaetota</taxon>
        <taxon>Spirochaetia</taxon>
        <taxon>Spirochaetales</taxon>
        <taxon>Treponemataceae</taxon>
        <taxon>Treponema</taxon>
    </lineage>
</organism>
<keyword id="KW-0560">Oxidoreductase</keyword>
<keyword id="KW-1185">Reference proteome</keyword>
<keyword id="KW-0712">Selenocysteine</keyword>
<name>GRDA_TREDE</name>
<gene>
    <name type="primary">grdA</name>
    <name type="ordered locus">TDE_0745</name>
</gene>
<sequence length="157" mass="16711">MVDLKTKKVIIIGDRDGVPGEAIKLCAESAGAEVVYAATECFVUTSAGAMDLENQKRVKDLAEKYGPENVIVLLGGAEAESSGLACETVTVGDPTFAGPLAGVSLGLLCYHVAEPEIKSQIDPAVYEEQVSMMEMVMDVNAIIAEISEYRNKGCKFL</sequence>
<accession>Q73PQ2</accession>
<protein>
    <recommendedName>
        <fullName>Glycine/sarcosine/betaine reductase complex component A</fullName>
        <ecNumber>1.21.4.2</ecNumber>
        <ecNumber>1.21.4.3</ecNumber>
        <ecNumber>1.21.4.4</ecNumber>
    </recommendedName>
    <alternativeName>
        <fullName>Selenoprotein PA</fullName>
    </alternativeName>
    <alternativeName>
        <fullName>Thioredoxin reductase complex selenoprotein A</fullName>
    </alternativeName>
</protein>
<dbReference type="EC" id="1.21.4.2"/>
<dbReference type="EC" id="1.21.4.3"/>
<dbReference type="EC" id="1.21.4.4"/>
<dbReference type="EMBL" id="AE017226">
    <property type="protein sequence ID" value="AAS11237.1"/>
    <property type="molecule type" value="Genomic_DNA"/>
</dbReference>
<dbReference type="RefSeq" id="NP_971356.1">
    <property type="nucleotide sequence ID" value="NC_002967.9"/>
</dbReference>
<dbReference type="RefSeq" id="WP_010956809.1">
    <property type="nucleotide sequence ID" value="NC_002967.9"/>
</dbReference>
<dbReference type="STRING" id="243275.TDE_0745"/>
<dbReference type="PaxDb" id="243275-TDE_0745"/>
<dbReference type="GeneID" id="2740299"/>
<dbReference type="KEGG" id="tde:TDE_0745"/>
<dbReference type="PATRIC" id="fig|243275.7.peg.720"/>
<dbReference type="eggNOG" id="ENOG50313TT">
    <property type="taxonomic scope" value="Bacteria"/>
</dbReference>
<dbReference type="HOGENOM" id="CLU_142275_0_0_12"/>
<dbReference type="OrthoDB" id="9787487at2"/>
<dbReference type="Proteomes" id="UP000008212">
    <property type="component" value="Chromosome"/>
</dbReference>
<dbReference type="GO" id="GO:0030700">
    <property type="term" value="C:glycine reductase complex"/>
    <property type="evidence" value="ECO:0007669"/>
    <property type="project" value="InterPro"/>
</dbReference>
<dbReference type="GO" id="GO:0033795">
    <property type="term" value="F:betaine reductase activity"/>
    <property type="evidence" value="ECO:0007669"/>
    <property type="project" value="UniProtKB-EC"/>
</dbReference>
<dbReference type="GO" id="GO:0030699">
    <property type="term" value="F:glycine reductase activity"/>
    <property type="evidence" value="ECO:0007669"/>
    <property type="project" value="UniProtKB-UniRule"/>
</dbReference>
<dbReference type="GO" id="GO:0033794">
    <property type="term" value="F:sarcosine reductase activity"/>
    <property type="evidence" value="ECO:0007669"/>
    <property type="project" value="UniProtKB-EC"/>
</dbReference>
<dbReference type="HAMAP" id="MF_00826">
    <property type="entry name" value="GRDA"/>
    <property type="match status" value="1"/>
</dbReference>
<dbReference type="InterPro" id="IPR006812">
    <property type="entry name" value="GRDA"/>
</dbReference>
<dbReference type="NCBIfam" id="NF040748">
    <property type="entry name" value="reduct_selen_A"/>
    <property type="match status" value="1"/>
</dbReference>
<dbReference type="Pfam" id="PF04723">
    <property type="entry name" value="GRDA"/>
    <property type="match status" value="1"/>
</dbReference>
<dbReference type="PIRSF" id="PIRSF000181">
    <property type="entry name" value="Grc_selenoprot_A"/>
    <property type="match status" value="1"/>
</dbReference>
<proteinExistence type="inferred from homology"/>
<comment type="function">
    <text evidence="1">In the first step of glycine, betaine and sarcosine reductases, the substrate is bound to component PB via a Schiff base intermediate. Then the PB-activated substrate is nucleophilically attacked by the selenol anion of component PA to transform it to a carboxymethylated selenoether and the respective amine. By action of component PC, acetyl phosphate is formed, leaving component PA in its oxidized state. Finally component PA becomes reduced by the thioredoxin system to start a new catalytic cycle of reductive deamination (By similarity).</text>
</comment>
<comment type="catalytic activity">
    <reaction>
        <text>acetyl phosphate + [thioredoxin]-disulfide + NH4(+) + H2O = [thioredoxin]-dithiol + glycine + phosphate + H(+)</text>
        <dbReference type="Rhea" id="RHEA:12232"/>
        <dbReference type="Rhea" id="RHEA-COMP:10698"/>
        <dbReference type="Rhea" id="RHEA-COMP:10700"/>
        <dbReference type="ChEBI" id="CHEBI:15377"/>
        <dbReference type="ChEBI" id="CHEBI:15378"/>
        <dbReference type="ChEBI" id="CHEBI:22191"/>
        <dbReference type="ChEBI" id="CHEBI:28938"/>
        <dbReference type="ChEBI" id="CHEBI:29950"/>
        <dbReference type="ChEBI" id="CHEBI:43474"/>
        <dbReference type="ChEBI" id="CHEBI:50058"/>
        <dbReference type="ChEBI" id="CHEBI:57305"/>
        <dbReference type="EC" id="1.21.4.2"/>
    </reaction>
</comment>
<comment type="catalytic activity">
    <reaction>
        <text>acetyl phosphate + methylamine + [thioredoxin]-disulfide + H2O = sarcosine + [thioredoxin]-dithiol + phosphate + H(+)</text>
        <dbReference type="Rhea" id="RHEA:12825"/>
        <dbReference type="Rhea" id="RHEA-COMP:10698"/>
        <dbReference type="Rhea" id="RHEA-COMP:10700"/>
        <dbReference type="ChEBI" id="CHEBI:15377"/>
        <dbReference type="ChEBI" id="CHEBI:15378"/>
        <dbReference type="ChEBI" id="CHEBI:22191"/>
        <dbReference type="ChEBI" id="CHEBI:29950"/>
        <dbReference type="ChEBI" id="CHEBI:43474"/>
        <dbReference type="ChEBI" id="CHEBI:50058"/>
        <dbReference type="ChEBI" id="CHEBI:57433"/>
        <dbReference type="ChEBI" id="CHEBI:59338"/>
        <dbReference type="EC" id="1.21.4.3"/>
    </reaction>
</comment>
<comment type="catalytic activity">
    <reaction>
        <text>acetyl phosphate + trimethylamine + [thioredoxin]-disulfide + H2O = glycine betaine + [thioredoxin]-dithiol + phosphate + H(+)</text>
        <dbReference type="Rhea" id="RHEA:11848"/>
        <dbReference type="Rhea" id="RHEA-COMP:10698"/>
        <dbReference type="Rhea" id="RHEA-COMP:10700"/>
        <dbReference type="ChEBI" id="CHEBI:15377"/>
        <dbReference type="ChEBI" id="CHEBI:15378"/>
        <dbReference type="ChEBI" id="CHEBI:17750"/>
        <dbReference type="ChEBI" id="CHEBI:22191"/>
        <dbReference type="ChEBI" id="CHEBI:29950"/>
        <dbReference type="ChEBI" id="CHEBI:43474"/>
        <dbReference type="ChEBI" id="CHEBI:50058"/>
        <dbReference type="ChEBI" id="CHEBI:58389"/>
        <dbReference type="EC" id="1.21.4.4"/>
    </reaction>
</comment>
<comment type="subunit">
    <text evidence="1">Monomer. Component of the glycine, sarcosine and betaine reductase complexes, together with components B and C (By similarity).</text>
</comment>
<comment type="similarity">
    <text evidence="2">Belongs to the GrdA family.</text>
</comment>
<feature type="chain" id="PRO_0000249764" description="Glycine/sarcosine/betaine reductase complex component A">
    <location>
        <begin position="1"/>
        <end position="157"/>
    </location>
</feature>
<feature type="active site" evidence="1">
    <location>
        <position position="44"/>
    </location>
</feature>
<feature type="non-standard amino acid" description="Selenocysteine" evidence="2">
    <location>
        <position position="44"/>
    </location>
</feature>
<reference key="1">
    <citation type="journal article" date="2004" name="Proc. Natl. Acad. Sci. U.S.A.">
        <title>Comparison of the genome of the oral pathogen Treponema denticola with other spirochete genomes.</title>
        <authorList>
            <person name="Seshadri R."/>
            <person name="Myers G.S.A."/>
            <person name="Tettelin H."/>
            <person name="Eisen J.A."/>
            <person name="Heidelberg J.F."/>
            <person name="Dodson R.J."/>
            <person name="Davidsen T.M."/>
            <person name="DeBoy R.T."/>
            <person name="Fouts D.E."/>
            <person name="Haft D.H."/>
            <person name="Selengut J."/>
            <person name="Ren Q."/>
            <person name="Brinkac L.M."/>
            <person name="Madupu R."/>
            <person name="Kolonay J.F."/>
            <person name="Durkin S.A."/>
            <person name="Daugherty S.C."/>
            <person name="Shetty J."/>
            <person name="Shvartsbeyn A."/>
            <person name="Gebregeorgis E."/>
            <person name="Geer K."/>
            <person name="Tsegaye G."/>
            <person name="Malek J.A."/>
            <person name="Ayodeji B."/>
            <person name="Shatsman S."/>
            <person name="McLeod M.P."/>
            <person name="Smajs D."/>
            <person name="Howell J.K."/>
            <person name="Pal S."/>
            <person name="Amin A."/>
            <person name="Vashisth P."/>
            <person name="McNeill T.Z."/>
            <person name="Xiang Q."/>
            <person name="Sodergren E."/>
            <person name="Baca E."/>
            <person name="Weinstock G.M."/>
            <person name="Norris S.J."/>
            <person name="Fraser C.M."/>
            <person name="Paulsen I.T."/>
        </authorList>
    </citation>
    <scope>NUCLEOTIDE SEQUENCE [LARGE SCALE GENOMIC DNA]</scope>
    <source>
        <strain>ATCC 35405 / DSM 14222 / CIP 103919 / JCM 8153 / KCTC 15104</strain>
    </source>
</reference>